<gene>
    <name type="ORF">PITG_12731</name>
</gene>
<accession>D0NL13</accession>
<protein>
    <recommendedName>
        <fullName evidence="5">RxLR effector protein PITG_12731</fullName>
    </recommendedName>
</protein>
<name>RXLRK_PHYIT</name>
<keyword id="KW-1035">Host cytoplasm</keyword>
<keyword id="KW-1048">Host nucleus</keyword>
<keyword id="KW-1185">Reference proteome</keyword>
<keyword id="KW-0964">Secreted</keyword>
<keyword id="KW-0732">Signal</keyword>
<keyword id="KW-0843">Virulence</keyword>
<comment type="function">
    <text evidence="4">Effector that enhances P.infestans colonization of Nicotiana benthamiana leaves.</text>
</comment>
<comment type="subcellular location">
    <subcellularLocation>
        <location evidence="4">Secreted</location>
    </subcellularLocation>
    <subcellularLocation>
        <location evidence="4">Host nucleus</location>
    </subcellularLocation>
    <subcellularLocation>
        <location evidence="4">Host cytoplasm</location>
    </subcellularLocation>
</comment>
<comment type="induction">
    <text evidence="2 3">Expression is induced during host plant infection.</text>
</comment>
<comment type="domain">
    <text evidence="7">The RxLR-dEER motif acts to carry the protein into the host cell cytoplasm through binding to cell surface phosphatidylinositol-3-phosphate.</text>
</comment>
<comment type="similarity">
    <text evidence="6">Belongs to the RxLR effector family.</text>
</comment>
<proteinExistence type="evidence at transcript level"/>
<reference key="1">
    <citation type="journal article" date="2009" name="Nature">
        <title>Genome sequence and analysis of the Irish potato famine pathogen Phytophthora infestans.</title>
        <authorList>
            <consortium name="The Broad Institute Genome Sequencing Platform"/>
            <person name="Haas B.J."/>
            <person name="Kamoun S."/>
            <person name="Zody M.C."/>
            <person name="Jiang R.H."/>
            <person name="Handsaker R.E."/>
            <person name="Cano L.M."/>
            <person name="Grabherr M."/>
            <person name="Kodira C.D."/>
            <person name="Raffaele S."/>
            <person name="Torto-Alalibo T."/>
            <person name="Bozkurt T.O."/>
            <person name="Ah-Fong A.M."/>
            <person name="Alvarado L."/>
            <person name="Anderson V.L."/>
            <person name="Armstrong M.R."/>
            <person name="Avrova A."/>
            <person name="Baxter L."/>
            <person name="Beynon J."/>
            <person name="Boevink P.C."/>
            <person name="Bollmann S.R."/>
            <person name="Bos J.I."/>
            <person name="Bulone V."/>
            <person name="Cai G."/>
            <person name="Cakir C."/>
            <person name="Carrington J.C."/>
            <person name="Chawner M."/>
            <person name="Conti L."/>
            <person name="Costanzo S."/>
            <person name="Ewan R."/>
            <person name="Fahlgren N."/>
            <person name="Fischbach M.A."/>
            <person name="Fugelstad J."/>
            <person name="Gilroy E.M."/>
            <person name="Gnerre S."/>
            <person name="Green P.J."/>
            <person name="Grenville-Briggs L.J."/>
            <person name="Griffith J."/>
            <person name="Grunwald N.J."/>
            <person name="Horn K."/>
            <person name="Horner N.R."/>
            <person name="Hu C.H."/>
            <person name="Huitema E."/>
            <person name="Jeong D.H."/>
            <person name="Jones A.M."/>
            <person name="Jones J.D."/>
            <person name="Jones R.W."/>
            <person name="Karlsson E.K."/>
            <person name="Kunjeti S.G."/>
            <person name="Lamour K."/>
            <person name="Liu Z."/>
            <person name="Ma L."/>
            <person name="Maclean D."/>
            <person name="Chibucos M.C."/>
            <person name="McDonald H."/>
            <person name="McWalters J."/>
            <person name="Meijer H.J."/>
            <person name="Morgan W."/>
            <person name="Morris P.F."/>
            <person name="Munro C.A."/>
            <person name="O'Neill K."/>
            <person name="Ospina-Giraldo M."/>
            <person name="Pinzon A."/>
            <person name="Pritchard L."/>
            <person name="Ramsahoye B."/>
            <person name="Ren Q."/>
            <person name="Restrepo S."/>
            <person name="Roy S."/>
            <person name="Sadanandom A."/>
            <person name="Savidor A."/>
            <person name="Schornack S."/>
            <person name="Schwartz D.C."/>
            <person name="Schumann U.D."/>
            <person name="Schwessinger B."/>
            <person name="Seyer L."/>
            <person name="Sharpe T."/>
            <person name="Silvar C."/>
            <person name="Song J."/>
            <person name="Studholme D.J."/>
            <person name="Sykes S."/>
            <person name="Thines M."/>
            <person name="van de Vondervoort P.J."/>
            <person name="Phuntumart V."/>
            <person name="Wawra S."/>
            <person name="Weide R."/>
            <person name="Win J."/>
            <person name="Young C."/>
            <person name="Zhou S."/>
            <person name="Fry W."/>
            <person name="Meyers B.C."/>
            <person name="van West P."/>
            <person name="Ristaino J."/>
            <person name="Govers F."/>
            <person name="Birch P.R."/>
            <person name="Whisson S.C."/>
            <person name="Judelson H.S."/>
            <person name="Nusbaum C."/>
        </authorList>
    </citation>
    <scope>NUCLEOTIDE SEQUENCE [LARGE SCALE GENOMIC DNA]</scope>
    <source>
        <strain>T30-4</strain>
    </source>
</reference>
<reference key="2">
    <citation type="journal article" date="2017" name="BMC Genomics">
        <title>RNA-seq of life stages of the oomycete Phytophthora infestans reveals dynamic changes in metabolic, signal transduction, and pathogenesis genes and a major role for calcium signaling in development.</title>
        <authorList>
            <person name="Ah-Fong A.M."/>
            <person name="Kim K.S."/>
            <person name="Judelson H.S."/>
        </authorList>
    </citation>
    <scope>INDUCTION</scope>
</reference>
<reference key="3">
    <citation type="journal article" date="2017" name="Front. Plant Sci.">
        <title>Conserved RXLR effector genes of Phytophthora infestans expressed at the early stage of potato infection are suppressive to host defense.</title>
        <authorList>
            <person name="Yin J."/>
            <person name="Gu B."/>
            <person name="Huang G."/>
            <person name="Tian Y."/>
            <person name="Quan J."/>
            <person name="Lindqvist-Kreuze H."/>
            <person name="Shan W."/>
        </authorList>
    </citation>
    <scope>INDUCTION</scope>
    <scope>DOMAIN</scope>
</reference>
<reference key="4">
    <citation type="journal article" date="2019" name="J. Exp. Bot.">
        <title>Phytophthora infestans RXLR effectors act in concert at diverse subcellular locations to enhance host colonization.</title>
        <authorList>
            <person name="Wang S."/>
            <person name="McLellan H."/>
            <person name="Bukharova T."/>
            <person name="He Q."/>
            <person name="Murphy F."/>
            <person name="Shi J."/>
            <person name="Sun S."/>
            <person name="van Weymers P."/>
            <person name="Ren Y."/>
            <person name="Thilliez G."/>
            <person name="Wang H."/>
            <person name="Chen X."/>
            <person name="Engelhardt S."/>
            <person name="Vleeshouwers V."/>
            <person name="Gilroy E.M."/>
            <person name="Whisson S.C."/>
            <person name="Hein I."/>
            <person name="Wang X."/>
            <person name="Tian Z."/>
            <person name="Birch P.R.J."/>
            <person name="Boevink P.C."/>
        </authorList>
    </citation>
    <scope>FUNCTION</scope>
    <scope>SUBCELLULAR LOCATION</scope>
</reference>
<organism>
    <name type="scientific">Phytophthora infestans (strain T30-4)</name>
    <name type="common">Potato late blight agent</name>
    <dbReference type="NCBI Taxonomy" id="403677"/>
    <lineage>
        <taxon>Eukaryota</taxon>
        <taxon>Sar</taxon>
        <taxon>Stramenopiles</taxon>
        <taxon>Oomycota</taxon>
        <taxon>Peronosporales</taxon>
        <taxon>Peronosporaceae</taxon>
        <taxon>Phytophthora</taxon>
    </lineage>
</organism>
<sequence length="371" mass="42728">MRFYSVLLTIVTLIASTYDAKVNASGIQAIAVSSISHDAPAARMLRADHADERGISVPSASKIVEWMLSPKVAKELTFLENRKVQKWVDKQKTQEYVFTKLGLNSGLDKALSNPKLHVYAAYIDRFNVKNPSNKVALLDKFSEKYTDEGVAKMVEMGIRSSNLETENFASRLWRELLNKWMDNAESAEGVFKILKLDEVGGGIFVTPLFNTWYAFIKEGYTRQAEDVVLRVLSDRYGYDGLSRIFFRGQRNFDLVGDLPIKLETRMVNNWLNKDVSPDKVFKLLKLDEGLDKLLTNSNMQVWESYMMKYNLMPDVEPTTMMQTITRFYNFKELSSMLENAKMVPELNKVAERWQHELRVHYLRAPKMKKEG</sequence>
<feature type="signal peptide" evidence="1">
    <location>
        <begin position="1"/>
        <end position="24"/>
    </location>
</feature>
<feature type="chain" id="PRO_5003013477" description="RxLR effector protein PITG_12731">
    <location>
        <begin position="25"/>
        <end position="371"/>
    </location>
</feature>
<feature type="short sequence motif" description="RxLR-dEER" evidence="7">
    <location>
        <begin position="43"/>
        <end position="53"/>
    </location>
</feature>
<evidence type="ECO:0000255" key="1"/>
<evidence type="ECO:0000269" key="2">
    <source>
    </source>
</evidence>
<evidence type="ECO:0000269" key="3">
    <source>
    </source>
</evidence>
<evidence type="ECO:0000269" key="4">
    <source>
    </source>
</evidence>
<evidence type="ECO:0000303" key="5">
    <source>
    </source>
</evidence>
<evidence type="ECO:0000305" key="6"/>
<evidence type="ECO:0000305" key="7">
    <source>
    </source>
</evidence>
<dbReference type="EMBL" id="DS028144">
    <property type="protein sequence ID" value="EEY60331.1"/>
    <property type="molecule type" value="Genomic_DNA"/>
</dbReference>
<dbReference type="RefSeq" id="XP_002900127.1">
    <property type="nucleotide sequence ID" value="XM_002900081.1"/>
</dbReference>
<dbReference type="SMR" id="D0NL13"/>
<dbReference type="EnsemblProtists" id="PITG_12731T0">
    <property type="protein sequence ID" value="PITG_12731T0"/>
    <property type="gene ID" value="PITG_12731"/>
</dbReference>
<dbReference type="GeneID" id="9478205"/>
<dbReference type="KEGG" id="pif:PITG_12731"/>
<dbReference type="VEuPathDB" id="FungiDB:PITG_12731"/>
<dbReference type="eggNOG" id="ENOG502RFS5">
    <property type="taxonomic scope" value="Eukaryota"/>
</dbReference>
<dbReference type="HOGENOM" id="CLU_021192_4_1_1"/>
<dbReference type="InParanoid" id="D0NL13"/>
<dbReference type="OMA" id="IATQWHA"/>
<dbReference type="OrthoDB" id="127440at2759"/>
<dbReference type="Proteomes" id="UP000006643">
    <property type="component" value="Partially assembled WGS sequence"/>
</dbReference>
<dbReference type="GO" id="GO:0005576">
    <property type="term" value="C:extracellular region"/>
    <property type="evidence" value="ECO:0007669"/>
    <property type="project" value="UniProtKB-SubCell"/>
</dbReference>
<dbReference type="GO" id="GO:0030430">
    <property type="term" value="C:host cell cytoplasm"/>
    <property type="evidence" value="ECO:0007669"/>
    <property type="project" value="UniProtKB-SubCell"/>
</dbReference>
<dbReference type="GO" id="GO:0042025">
    <property type="term" value="C:host cell nucleus"/>
    <property type="evidence" value="ECO:0007669"/>
    <property type="project" value="UniProtKB-SubCell"/>
</dbReference>